<comment type="function">
    <text evidence="1">Essential cell division protein. May link together the upstream cell division proteins, which are predominantly cytoplasmic, with the downstream cell division proteins, which are predominantly periplasmic.</text>
</comment>
<comment type="subunit">
    <text evidence="1">Part of a complex composed of FtsB, FtsL and FtsQ.</text>
</comment>
<comment type="subcellular location">
    <subcellularLocation>
        <location evidence="1">Cell inner membrane</location>
        <topology evidence="1">Single-pass type II membrane protein</topology>
    </subcellularLocation>
    <text evidence="1">Localizes to the division septum.</text>
</comment>
<comment type="similarity">
    <text evidence="1">Belongs to the FtsB family.</text>
</comment>
<feature type="chain" id="PRO_1000025721" description="Cell division protein FtsB">
    <location>
        <begin position="1"/>
        <end position="105"/>
    </location>
</feature>
<feature type="topological domain" description="Cytoplasmic" evidence="1">
    <location>
        <begin position="1"/>
        <end position="3"/>
    </location>
</feature>
<feature type="transmembrane region" description="Helical" evidence="1">
    <location>
        <begin position="4"/>
        <end position="21"/>
    </location>
</feature>
<feature type="topological domain" description="Periplasmic" evidence="1">
    <location>
        <begin position="22"/>
        <end position="105"/>
    </location>
</feature>
<feature type="coiled-coil region" evidence="1">
    <location>
        <begin position="38"/>
        <end position="75"/>
    </location>
</feature>
<protein>
    <recommendedName>
        <fullName evidence="1">Cell division protein FtsB</fullName>
    </recommendedName>
</protein>
<accession>A1S4D8</accession>
<gene>
    <name evidence="1" type="primary">ftsB</name>
    <name type="ordered locus">Sama_1037</name>
</gene>
<keyword id="KW-0131">Cell cycle</keyword>
<keyword id="KW-0132">Cell division</keyword>
<keyword id="KW-0997">Cell inner membrane</keyword>
<keyword id="KW-1003">Cell membrane</keyword>
<keyword id="KW-0175">Coiled coil</keyword>
<keyword id="KW-0472">Membrane</keyword>
<keyword id="KW-1185">Reference proteome</keyword>
<keyword id="KW-0812">Transmembrane</keyword>
<keyword id="KW-1133">Transmembrane helix</keyword>
<evidence type="ECO:0000255" key="1">
    <source>
        <dbReference type="HAMAP-Rule" id="MF_00599"/>
    </source>
</evidence>
<sequence length="105" mass="12164">MKPFVLVLFALLALLQYRLWFGENSLTEYFTLKDRISHQQSGNAELLERNEVLKEEIQDLKSGTEALEERARNELGLIEQGETFFRVVGNDSRSIRSSEQSQDNQ</sequence>
<organism>
    <name type="scientific">Shewanella amazonensis (strain ATCC BAA-1098 / SB2B)</name>
    <dbReference type="NCBI Taxonomy" id="326297"/>
    <lineage>
        <taxon>Bacteria</taxon>
        <taxon>Pseudomonadati</taxon>
        <taxon>Pseudomonadota</taxon>
        <taxon>Gammaproteobacteria</taxon>
        <taxon>Alteromonadales</taxon>
        <taxon>Shewanellaceae</taxon>
        <taxon>Shewanella</taxon>
    </lineage>
</organism>
<dbReference type="EMBL" id="CP000507">
    <property type="protein sequence ID" value="ABL99244.1"/>
    <property type="molecule type" value="Genomic_DNA"/>
</dbReference>
<dbReference type="RefSeq" id="WP_011759153.1">
    <property type="nucleotide sequence ID" value="NC_008700.1"/>
</dbReference>
<dbReference type="SMR" id="A1S4D8"/>
<dbReference type="STRING" id="326297.Sama_1037"/>
<dbReference type="KEGG" id="saz:Sama_1037"/>
<dbReference type="eggNOG" id="COG2919">
    <property type="taxonomic scope" value="Bacteria"/>
</dbReference>
<dbReference type="HOGENOM" id="CLU_134863_5_2_6"/>
<dbReference type="OrthoDB" id="7061211at2"/>
<dbReference type="Proteomes" id="UP000009175">
    <property type="component" value="Chromosome"/>
</dbReference>
<dbReference type="GO" id="GO:0032153">
    <property type="term" value="C:cell division site"/>
    <property type="evidence" value="ECO:0007669"/>
    <property type="project" value="UniProtKB-UniRule"/>
</dbReference>
<dbReference type="GO" id="GO:0030428">
    <property type="term" value="C:cell septum"/>
    <property type="evidence" value="ECO:0007669"/>
    <property type="project" value="TreeGrafter"/>
</dbReference>
<dbReference type="GO" id="GO:0005886">
    <property type="term" value="C:plasma membrane"/>
    <property type="evidence" value="ECO:0007669"/>
    <property type="project" value="UniProtKB-SubCell"/>
</dbReference>
<dbReference type="GO" id="GO:0043093">
    <property type="term" value="P:FtsZ-dependent cytokinesis"/>
    <property type="evidence" value="ECO:0007669"/>
    <property type="project" value="UniProtKB-UniRule"/>
</dbReference>
<dbReference type="HAMAP" id="MF_00599">
    <property type="entry name" value="FtsB"/>
    <property type="match status" value="1"/>
</dbReference>
<dbReference type="InterPro" id="IPR023081">
    <property type="entry name" value="Cell_div_FtsB"/>
</dbReference>
<dbReference type="InterPro" id="IPR007060">
    <property type="entry name" value="FtsL/DivIC"/>
</dbReference>
<dbReference type="NCBIfam" id="NF002058">
    <property type="entry name" value="PRK00888.1"/>
    <property type="match status" value="1"/>
</dbReference>
<dbReference type="PANTHER" id="PTHR37485">
    <property type="entry name" value="CELL DIVISION PROTEIN FTSB"/>
    <property type="match status" value="1"/>
</dbReference>
<dbReference type="PANTHER" id="PTHR37485:SF1">
    <property type="entry name" value="CELL DIVISION PROTEIN FTSB"/>
    <property type="match status" value="1"/>
</dbReference>
<dbReference type="Pfam" id="PF04977">
    <property type="entry name" value="DivIC"/>
    <property type="match status" value="1"/>
</dbReference>
<reference key="1">
    <citation type="submission" date="2006-12" db="EMBL/GenBank/DDBJ databases">
        <title>Complete sequence of Shewanella amazonensis SB2B.</title>
        <authorList>
            <consortium name="US DOE Joint Genome Institute"/>
            <person name="Copeland A."/>
            <person name="Lucas S."/>
            <person name="Lapidus A."/>
            <person name="Barry K."/>
            <person name="Detter J.C."/>
            <person name="Glavina del Rio T."/>
            <person name="Hammon N."/>
            <person name="Israni S."/>
            <person name="Dalin E."/>
            <person name="Tice H."/>
            <person name="Pitluck S."/>
            <person name="Munk A.C."/>
            <person name="Brettin T."/>
            <person name="Bruce D."/>
            <person name="Han C."/>
            <person name="Tapia R."/>
            <person name="Gilna P."/>
            <person name="Schmutz J."/>
            <person name="Larimer F."/>
            <person name="Land M."/>
            <person name="Hauser L."/>
            <person name="Kyrpides N."/>
            <person name="Mikhailova N."/>
            <person name="Fredrickson J."/>
            <person name="Richardson P."/>
        </authorList>
    </citation>
    <scope>NUCLEOTIDE SEQUENCE [LARGE SCALE GENOMIC DNA]</scope>
    <source>
        <strain>ATCC BAA-1098 / SB2B</strain>
    </source>
</reference>
<proteinExistence type="inferred from homology"/>
<name>FTSB_SHEAM</name>